<comment type="function">
    <text evidence="1">Increases the formation of ribosomal termination complexes and stimulates activities of RF-1 and RF-2. It binds guanine nucleotides and has strong preference for UGA stop codons. It may interact directly with the ribosome. The stimulation of RF-1 and RF-2 is significantly reduced by GTP and GDP, but not by GMP.</text>
</comment>
<comment type="subcellular location">
    <subcellularLocation>
        <location evidence="1">Cytoplasm</location>
    </subcellularLocation>
</comment>
<comment type="similarity">
    <text evidence="1">Belongs to the TRAFAC class translation factor GTPase superfamily. Classic translation factor GTPase family. PrfC subfamily.</text>
</comment>
<accession>B2SF23</accession>
<organism>
    <name type="scientific">Francisella tularensis subsp. mediasiatica (strain FSC147)</name>
    <dbReference type="NCBI Taxonomy" id="441952"/>
    <lineage>
        <taxon>Bacteria</taxon>
        <taxon>Pseudomonadati</taxon>
        <taxon>Pseudomonadota</taxon>
        <taxon>Gammaproteobacteria</taxon>
        <taxon>Thiotrichales</taxon>
        <taxon>Francisellaceae</taxon>
        <taxon>Francisella</taxon>
    </lineage>
</organism>
<name>RF3_FRATM</name>
<feature type="chain" id="PRO_1000092485" description="Peptide chain release factor 3">
    <location>
        <begin position="1"/>
        <end position="525"/>
    </location>
</feature>
<feature type="domain" description="tr-type G">
    <location>
        <begin position="9"/>
        <end position="276"/>
    </location>
</feature>
<feature type="binding site" evidence="1">
    <location>
        <begin position="18"/>
        <end position="25"/>
    </location>
    <ligand>
        <name>GTP</name>
        <dbReference type="ChEBI" id="CHEBI:37565"/>
    </ligand>
</feature>
<feature type="binding site" evidence="1">
    <location>
        <begin position="86"/>
        <end position="90"/>
    </location>
    <ligand>
        <name>GTP</name>
        <dbReference type="ChEBI" id="CHEBI:37565"/>
    </ligand>
</feature>
<feature type="binding site" evidence="1">
    <location>
        <begin position="140"/>
        <end position="143"/>
    </location>
    <ligand>
        <name>GTP</name>
        <dbReference type="ChEBI" id="CHEBI:37565"/>
    </ligand>
</feature>
<proteinExistence type="inferred from homology"/>
<dbReference type="EMBL" id="CP000915">
    <property type="protein sequence ID" value="ACD30268.1"/>
    <property type="molecule type" value="Genomic_DNA"/>
</dbReference>
<dbReference type="SMR" id="B2SF23"/>
<dbReference type="KEGG" id="ftm:FTM_0180"/>
<dbReference type="HOGENOM" id="CLU_002794_2_1_6"/>
<dbReference type="GO" id="GO:0005829">
    <property type="term" value="C:cytosol"/>
    <property type="evidence" value="ECO:0007669"/>
    <property type="project" value="TreeGrafter"/>
</dbReference>
<dbReference type="GO" id="GO:0005525">
    <property type="term" value="F:GTP binding"/>
    <property type="evidence" value="ECO:0007669"/>
    <property type="project" value="UniProtKB-UniRule"/>
</dbReference>
<dbReference type="GO" id="GO:0003924">
    <property type="term" value="F:GTPase activity"/>
    <property type="evidence" value="ECO:0007669"/>
    <property type="project" value="InterPro"/>
</dbReference>
<dbReference type="GO" id="GO:0097216">
    <property type="term" value="F:guanosine tetraphosphate binding"/>
    <property type="evidence" value="ECO:0007669"/>
    <property type="project" value="UniProtKB-ARBA"/>
</dbReference>
<dbReference type="GO" id="GO:0016150">
    <property type="term" value="F:translation release factor activity, codon nonspecific"/>
    <property type="evidence" value="ECO:0007669"/>
    <property type="project" value="TreeGrafter"/>
</dbReference>
<dbReference type="GO" id="GO:0016149">
    <property type="term" value="F:translation release factor activity, codon specific"/>
    <property type="evidence" value="ECO:0007669"/>
    <property type="project" value="UniProtKB-UniRule"/>
</dbReference>
<dbReference type="GO" id="GO:0006449">
    <property type="term" value="P:regulation of translational termination"/>
    <property type="evidence" value="ECO:0007669"/>
    <property type="project" value="UniProtKB-UniRule"/>
</dbReference>
<dbReference type="CDD" id="cd04169">
    <property type="entry name" value="RF3"/>
    <property type="match status" value="1"/>
</dbReference>
<dbReference type="CDD" id="cd16259">
    <property type="entry name" value="RF3_III"/>
    <property type="match status" value="1"/>
</dbReference>
<dbReference type="FunFam" id="2.40.30.10:FF:000040">
    <property type="entry name" value="Peptide chain release factor 3"/>
    <property type="match status" value="1"/>
</dbReference>
<dbReference type="FunFam" id="3.30.70.3280:FF:000001">
    <property type="entry name" value="Peptide chain release factor 3"/>
    <property type="match status" value="1"/>
</dbReference>
<dbReference type="FunFam" id="3.40.50.300:FF:000542">
    <property type="entry name" value="Peptide chain release factor 3"/>
    <property type="match status" value="1"/>
</dbReference>
<dbReference type="Gene3D" id="3.40.50.300">
    <property type="entry name" value="P-loop containing nucleotide triphosphate hydrolases"/>
    <property type="match status" value="1"/>
</dbReference>
<dbReference type="Gene3D" id="3.30.70.3280">
    <property type="entry name" value="Peptide chain release factor 3, domain III"/>
    <property type="match status" value="1"/>
</dbReference>
<dbReference type="Gene3D" id="2.40.30.10">
    <property type="entry name" value="Translation factors"/>
    <property type="match status" value="1"/>
</dbReference>
<dbReference type="HAMAP" id="MF_00072">
    <property type="entry name" value="Rel_fac_3"/>
    <property type="match status" value="1"/>
</dbReference>
<dbReference type="InterPro" id="IPR053905">
    <property type="entry name" value="EF-G-like_DII"/>
</dbReference>
<dbReference type="InterPro" id="IPR035647">
    <property type="entry name" value="EFG_III/V"/>
</dbReference>
<dbReference type="InterPro" id="IPR031157">
    <property type="entry name" value="G_TR_CS"/>
</dbReference>
<dbReference type="InterPro" id="IPR027417">
    <property type="entry name" value="P-loop_NTPase"/>
</dbReference>
<dbReference type="InterPro" id="IPR004548">
    <property type="entry name" value="PrfC"/>
</dbReference>
<dbReference type="InterPro" id="IPR032090">
    <property type="entry name" value="RF3_C"/>
</dbReference>
<dbReference type="InterPro" id="IPR038467">
    <property type="entry name" value="RF3_dom_3_sf"/>
</dbReference>
<dbReference type="InterPro" id="IPR041732">
    <property type="entry name" value="RF3_GTP-bd"/>
</dbReference>
<dbReference type="InterPro" id="IPR005225">
    <property type="entry name" value="Small_GTP-bd"/>
</dbReference>
<dbReference type="InterPro" id="IPR000795">
    <property type="entry name" value="T_Tr_GTP-bd_dom"/>
</dbReference>
<dbReference type="InterPro" id="IPR009000">
    <property type="entry name" value="Transl_B-barrel_sf"/>
</dbReference>
<dbReference type="NCBIfam" id="TIGR00503">
    <property type="entry name" value="prfC"/>
    <property type="match status" value="1"/>
</dbReference>
<dbReference type="NCBIfam" id="NF001964">
    <property type="entry name" value="PRK00741.1"/>
    <property type="match status" value="1"/>
</dbReference>
<dbReference type="NCBIfam" id="TIGR00231">
    <property type="entry name" value="small_GTP"/>
    <property type="match status" value="1"/>
</dbReference>
<dbReference type="PANTHER" id="PTHR43556">
    <property type="entry name" value="PEPTIDE CHAIN RELEASE FACTOR RF3"/>
    <property type="match status" value="1"/>
</dbReference>
<dbReference type="PANTHER" id="PTHR43556:SF2">
    <property type="entry name" value="PEPTIDE CHAIN RELEASE FACTOR RF3"/>
    <property type="match status" value="1"/>
</dbReference>
<dbReference type="Pfam" id="PF22042">
    <property type="entry name" value="EF-G_D2"/>
    <property type="match status" value="1"/>
</dbReference>
<dbReference type="Pfam" id="PF00009">
    <property type="entry name" value="GTP_EFTU"/>
    <property type="match status" value="1"/>
</dbReference>
<dbReference type="Pfam" id="PF16658">
    <property type="entry name" value="RF3_C"/>
    <property type="match status" value="1"/>
</dbReference>
<dbReference type="PRINTS" id="PR00315">
    <property type="entry name" value="ELONGATNFCT"/>
</dbReference>
<dbReference type="SUPFAM" id="SSF54980">
    <property type="entry name" value="EF-G C-terminal domain-like"/>
    <property type="match status" value="1"/>
</dbReference>
<dbReference type="SUPFAM" id="SSF52540">
    <property type="entry name" value="P-loop containing nucleoside triphosphate hydrolases"/>
    <property type="match status" value="1"/>
</dbReference>
<dbReference type="SUPFAM" id="SSF50447">
    <property type="entry name" value="Translation proteins"/>
    <property type="match status" value="1"/>
</dbReference>
<dbReference type="PROSITE" id="PS00301">
    <property type="entry name" value="G_TR_1"/>
    <property type="match status" value="1"/>
</dbReference>
<dbReference type="PROSITE" id="PS51722">
    <property type="entry name" value="G_TR_2"/>
    <property type="match status" value="1"/>
</dbReference>
<protein>
    <recommendedName>
        <fullName evidence="1">Peptide chain release factor 3</fullName>
        <shortName evidence="1">RF-3</shortName>
    </recommendedName>
</protein>
<evidence type="ECO:0000255" key="1">
    <source>
        <dbReference type="HAMAP-Rule" id="MF_00072"/>
    </source>
</evidence>
<sequence>MSEYLQQIAKRRTFAIISHPDAGKTTITEKMLLFGNAIKTAGTVKAKKSGIYATSDWMEMEKQRGISITTSVMQFPYNGRIINLLDTPGHEDFSEDTYRTLTAVDSALMVVDAVKGVEDRTIKLMNVCRLRDTPIVTFMNKFDRDTRDPLELLDEVENILKIKCAPMNWPIGMGKYFKGVYDLYNDEVTLFETGHGHEIYPYKKIKGLANAKDAIGIDLYEDLEMEIDLVRGASHEFDEQEFLEGNLTPVYFGTALSNFGVKEMMDGFTRYAPAPQHREADQRVVAADEQKLTGFVFKIQANMDEKHRNRIAFFRICSGKYEKGMKIFHERTGKQMQISKALTFMAGEREQVEEGYAGDIIGLHNHGSIQIGDSFTQGEKLKFKGIPNFAPEIFKRVKLNDPLKMKALQKGLVQLSEEGATQVFKPFISNDLVLGAVGVLQFDVVAQRLASEYNVKCSYEGVNVTLARWIFCSDEKKLNDFKKKYEVNLAYDGAGYLTYLAPTGVNLQLAQEKNPDIIFSATREH</sequence>
<reference key="1">
    <citation type="journal article" date="2009" name="PLoS Pathog.">
        <title>Molecular evolutionary consequences of niche restriction in Francisella tularensis, a facultative intracellular pathogen.</title>
        <authorList>
            <person name="Larsson P."/>
            <person name="Elfsmark D."/>
            <person name="Svensson K."/>
            <person name="Wikstroem P."/>
            <person name="Forsman M."/>
            <person name="Brettin T."/>
            <person name="Keim P."/>
            <person name="Johansson A."/>
        </authorList>
    </citation>
    <scope>NUCLEOTIDE SEQUENCE [LARGE SCALE GENOMIC DNA]</scope>
    <source>
        <strain>FSC147</strain>
    </source>
</reference>
<keyword id="KW-0963">Cytoplasm</keyword>
<keyword id="KW-0342">GTP-binding</keyword>
<keyword id="KW-0547">Nucleotide-binding</keyword>
<keyword id="KW-0648">Protein biosynthesis</keyword>
<gene>
    <name evidence="1" type="primary">prfC</name>
    <name type="ordered locus">FTM_0180</name>
</gene>